<accession>B2A534</accession>
<sequence length="139" mass="16012">MSRRTAREASMKLVFQMAFNDDHVDEVGAEDILAQAKEELNYNNYQYIETVVSRTESNLQKIDEYIEKFSENWKIDRLSKVDLSILRLAISEILFFDDIPTRVSINEAVELAKKFSTDKASGYINGILDQVANQLNKAR</sequence>
<gene>
    <name evidence="1" type="primary">nusB</name>
    <name type="ordered locus">Nther_1702</name>
</gene>
<dbReference type="EMBL" id="CP001034">
    <property type="protein sequence ID" value="ACB85276.1"/>
    <property type="molecule type" value="Genomic_DNA"/>
</dbReference>
<dbReference type="RefSeq" id="WP_012448144.1">
    <property type="nucleotide sequence ID" value="NC_010718.1"/>
</dbReference>
<dbReference type="SMR" id="B2A534"/>
<dbReference type="FunCoup" id="B2A534">
    <property type="interactions" value="305"/>
</dbReference>
<dbReference type="STRING" id="457570.Nther_1702"/>
<dbReference type="KEGG" id="nth:Nther_1702"/>
<dbReference type="eggNOG" id="COG0781">
    <property type="taxonomic scope" value="Bacteria"/>
</dbReference>
<dbReference type="HOGENOM" id="CLU_087843_3_1_9"/>
<dbReference type="InParanoid" id="B2A534"/>
<dbReference type="OrthoDB" id="9811381at2"/>
<dbReference type="Proteomes" id="UP000001683">
    <property type="component" value="Chromosome"/>
</dbReference>
<dbReference type="GO" id="GO:0005829">
    <property type="term" value="C:cytosol"/>
    <property type="evidence" value="ECO:0007669"/>
    <property type="project" value="TreeGrafter"/>
</dbReference>
<dbReference type="GO" id="GO:0003723">
    <property type="term" value="F:RNA binding"/>
    <property type="evidence" value="ECO:0007669"/>
    <property type="project" value="UniProtKB-UniRule"/>
</dbReference>
<dbReference type="GO" id="GO:0006353">
    <property type="term" value="P:DNA-templated transcription termination"/>
    <property type="evidence" value="ECO:0007669"/>
    <property type="project" value="UniProtKB-UniRule"/>
</dbReference>
<dbReference type="GO" id="GO:0031564">
    <property type="term" value="P:transcription antitermination"/>
    <property type="evidence" value="ECO:0007669"/>
    <property type="project" value="UniProtKB-KW"/>
</dbReference>
<dbReference type="Gene3D" id="1.10.940.10">
    <property type="entry name" value="NusB-like"/>
    <property type="match status" value="1"/>
</dbReference>
<dbReference type="HAMAP" id="MF_00073">
    <property type="entry name" value="NusB"/>
    <property type="match status" value="1"/>
</dbReference>
<dbReference type="InterPro" id="IPR035926">
    <property type="entry name" value="NusB-like_sf"/>
</dbReference>
<dbReference type="InterPro" id="IPR011605">
    <property type="entry name" value="NusB_fam"/>
</dbReference>
<dbReference type="InterPro" id="IPR006027">
    <property type="entry name" value="NusB_RsmB_TIM44"/>
</dbReference>
<dbReference type="NCBIfam" id="TIGR01951">
    <property type="entry name" value="nusB"/>
    <property type="match status" value="1"/>
</dbReference>
<dbReference type="PANTHER" id="PTHR11078:SF3">
    <property type="entry name" value="ANTITERMINATION NUSB DOMAIN-CONTAINING PROTEIN"/>
    <property type="match status" value="1"/>
</dbReference>
<dbReference type="PANTHER" id="PTHR11078">
    <property type="entry name" value="N UTILIZATION SUBSTANCE PROTEIN B-RELATED"/>
    <property type="match status" value="1"/>
</dbReference>
<dbReference type="Pfam" id="PF01029">
    <property type="entry name" value="NusB"/>
    <property type="match status" value="1"/>
</dbReference>
<dbReference type="SUPFAM" id="SSF48013">
    <property type="entry name" value="NusB-like"/>
    <property type="match status" value="1"/>
</dbReference>
<proteinExistence type="inferred from homology"/>
<evidence type="ECO:0000255" key="1">
    <source>
        <dbReference type="HAMAP-Rule" id="MF_00073"/>
    </source>
</evidence>
<name>NUSB_NATTJ</name>
<reference key="1">
    <citation type="submission" date="2008-04" db="EMBL/GenBank/DDBJ databases">
        <title>Complete sequence of chromosome of Natranaerobius thermophilus JW/NM-WN-LF.</title>
        <authorList>
            <consortium name="US DOE Joint Genome Institute"/>
            <person name="Copeland A."/>
            <person name="Lucas S."/>
            <person name="Lapidus A."/>
            <person name="Glavina del Rio T."/>
            <person name="Dalin E."/>
            <person name="Tice H."/>
            <person name="Bruce D."/>
            <person name="Goodwin L."/>
            <person name="Pitluck S."/>
            <person name="Chertkov O."/>
            <person name="Brettin T."/>
            <person name="Detter J.C."/>
            <person name="Han C."/>
            <person name="Kuske C.R."/>
            <person name="Schmutz J."/>
            <person name="Larimer F."/>
            <person name="Land M."/>
            <person name="Hauser L."/>
            <person name="Kyrpides N."/>
            <person name="Lykidis A."/>
            <person name="Mesbah N.M."/>
            <person name="Wiegel J."/>
        </authorList>
    </citation>
    <scope>NUCLEOTIDE SEQUENCE [LARGE SCALE GENOMIC DNA]</scope>
    <source>
        <strain>ATCC BAA-1301 / DSM 18059 / JW/NM-WN-LF</strain>
    </source>
</reference>
<keyword id="KW-1185">Reference proteome</keyword>
<keyword id="KW-0694">RNA-binding</keyword>
<keyword id="KW-0804">Transcription</keyword>
<keyword id="KW-0889">Transcription antitermination</keyword>
<keyword id="KW-0805">Transcription regulation</keyword>
<comment type="function">
    <text evidence="1">Involved in transcription antitermination. Required for transcription of ribosomal RNA (rRNA) genes. Binds specifically to the boxA antiterminator sequence of the ribosomal RNA (rrn) operons.</text>
</comment>
<comment type="similarity">
    <text evidence="1">Belongs to the NusB family.</text>
</comment>
<feature type="chain" id="PRO_1000092567" description="Transcription antitermination protein NusB">
    <location>
        <begin position="1"/>
        <end position="139"/>
    </location>
</feature>
<organism>
    <name type="scientific">Natranaerobius thermophilus (strain ATCC BAA-1301 / DSM 18059 / JW/NM-WN-LF)</name>
    <dbReference type="NCBI Taxonomy" id="457570"/>
    <lineage>
        <taxon>Bacteria</taxon>
        <taxon>Bacillati</taxon>
        <taxon>Bacillota</taxon>
        <taxon>Clostridia</taxon>
        <taxon>Natranaerobiales</taxon>
        <taxon>Natranaerobiaceae</taxon>
        <taxon>Natranaerobius</taxon>
    </lineage>
</organism>
<protein>
    <recommendedName>
        <fullName evidence="1">Transcription antitermination protein NusB</fullName>
    </recommendedName>
    <alternativeName>
        <fullName evidence="1">Antitermination factor NusB</fullName>
    </alternativeName>
</protein>